<reference key="1">
    <citation type="journal article" date="2004" name="Nat. Genet.">
        <title>Evidence in the Legionella pneumophila genome for exploitation of host cell functions and high genome plasticity.</title>
        <authorList>
            <person name="Cazalet C."/>
            <person name="Rusniok C."/>
            <person name="Brueggemann H."/>
            <person name="Zidane N."/>
            <person name="Magnier A."/>
            <person name="Ma L."/>
            <person name="Tichit M."/>
            <person name="Jarraud S."/>
            <person name="Bouchier C."/>
            <person name="Vandenesch F."/>
            <person name="Kunst F."/>
            <person name="Etienne J."/>
            <person name="Glaser P."/>
            <person name="Buchrieser C."/>
        </authorList>
    </citation>
    <scope>NUCLEOTIDE SEQUENCE [LARGE SCALE GENOMIC DNA]</scope>
    <source>
        <strain>Lens</strain>
    </source>
</reference>
<accession>Q5WZJ3</accession>
<protein>
    <recommendedName>
        <fullName evidence="1">Large ribosomal subunit protein uL15</fullName>
    </recommendedName>
    <alternativeName>
        <fullName evidence="3">50S ribosomal protein L15</fullName>
    </alternativeName>
</protein>
<dbReference type="EMBL" id="CR628337">
    <property type="protein sequence ID" value="CAH14619.1"/>
    <property type="molecule type" value="Genomic_DNA"/>
</dbReference>
<dbReference type="RefSeq" id="WP_010946097.1">
    <property type="nucleotide sequence ID" value="NC_006369.1"/>
</dbReference>
<dbReference type="SMR" id="Q5WZJ3"/>
<dbReference type="GeneID" id="57034351"/>
<dbReference type="KEGG" id="lpf:lpl0388"/>
<dbReference type="LegioList" id="lpl0388"/>
<dbReference type="HOGENOM" id="CLU_055188_4_2_6"/>
<dbReference type="Proteomes" id="UP000002517">
    <property type="component" value="Chromosome"/>
</dbReference>
<dbReference type="GO" id="GO:0022625">
    <property type="term" value="C:cytosolic large ribosomal subunit"/>
    <property type="evidence" value="ECO:0007669"/>
    <property type="project" value="TreeGrafter"/>
</dbReference>
<dbReference type="GO" id="GO:0019843">
    <property type="term" value="F:rRNA binding"/>
    <property type="evidence" value="ECO:0007669"/>
    <property type="project" value="UniProtKB-UniRule"/>
</dbReference>
<dbReference type="GO" id="GO:0003735">
    <property type="term" value="F:structural constituent of ribosome"/>
    <property type="evidence" value="ECO:0007669"/>
    <property type="project" value="InterPro"/>
</dbReference>
<dbReference type="GO" id="GO:0006412">
    <property type="term" value="P:translation"/>
    <property type="evidence" value="ECO:0007669"/>
    <property type="project" value="UniProtKB-UniRule"/>
</dbReference>
<dbReference type="Gene3D" id="3.100.10.10">
    <property type="match status" value="1"/>
</dbReference>
<dbReference type="HAMAP" id="MF_01341">
    <property type="entry name" value="Ribosomal_uL15"/>
    <property type="match status" value="1"/>
</dbReference>
<dbReference type="InterPro" id="IPR030878">
    <property type="entry name" value="Ribosomal_uL15"/>
</dbReference>
<dbReference type="InterPro" id="IPR021131">
    <property type="entry name" value="Ribosomal_uL15/eL18"/>
</dbReference>
<dbReference type="InterPro" id="IPR036227">
    <property type="entry name" value="Ribosomal_uL15/eL18_sf"/>
</dbReference>
<dbReference type="InterPro" id="IPR005749">
    <property type="entry name" value="Ribosomal_uL15_bac-type"/>
</dbReference>
<dbReference type="InterPro" id="IPR001196">
    <property type="entry name" value="Ribosomal_uL15_CS"/>
</dbReference>
<dbReference type="NCBIfam" id="TIGR01071">
    <property type="entry name" value="rplO_bact"/>
    <property type="match status" value="1"/>
</dbReference>
<dbReference type="PANTHER" id="PTHR12934">
    <property type="entry name" value="50S RIBOSOMAL PROTEIN L15"/>
    <property type="match status" value="1"/>
</dbReference>
<dbReference type="PANTHER" id="PTHR12934:SF11">
    <property type="entry name" value="LARGE RIBOSOMAL SUBUNIT PROTEIN UL15M"/>
    <property type="match status" value="1"/>
</dbReference>
<dbReference type="Pfam" id="PF00828">
    <property type="entry name" value="Ribosomal_L27A"/>
    <property type="match status" value="1"/>
</dbReference>
<dbReference type="SUPFAM" id="SSF52080">
    <property type="entry name" value="Ribosomal proteins L15p and L18e"/>
    <property type="match status" value="1"/>
</dbReference>
<dbReference type="PROSITE" id="PS00475">
    <property type="entry name" value="RIBOSOMAL_L15"/>
    <property type="match status" value="1"/>
</dbReference>
<comment type="function">
    <text evidence="1">Binds to the 23S rRNA.</text>
</comment>
<comment type="subunit">
    <text evidence="1">Part of the 50S ribosomal subunit.</text>
</comment>
<comment type="similarity">
    <text evidence="1">Belongs to the universal ribosomal protein uL15 family.</text>
</comment>
<evidence type="ECO:0000255" key="1">
    <source>
        <dbReference type="HAMAP-Rule" id="MF_01341"/>
    </source>
</evidence>
<evidence type="ECO:0000256" key="2">
    <source>
        <dbReference type="SAM" id="MobiDB-lite"/>
    </source>
</evidence>
<evidence type="ECO:0000305" key="3"/>
<name>RL15_LEGPL</name>
<proteinExistence type="inferred from homology"/>
<feature type="chain" id="PRO_0000104740" description="Large ribosomal subunit protein uL15">
    <location>
        <begin position="1"/>
        <end position="144"/>
    </location>
</feature>
<feature type="region of interest" description="Disordered" evidence="2">
    <location>
        <begin position="1"/>
        <end position="45"/>
    </location>
</feature>
<feature type="compositionally biased region" description="Gly residues" evidence="2">
    <location>
        <begin position="21"/>
        <end position="31"/>
    </location>
</feature>
<sequence length="144" mass="15344">MNLNTLSPDPGSRPSRRRVGRGIGSGLGKTCGKGHKGQKSRAGGYHKINFEGGQMPIQRRLPKMGFKSRVGRTIDEVSLGELAKLNDEVIDLVALRKAGLINNSIKDVKVILSGELTAAIKLKGLRVTKGARSAIESLGGSIEE</sequence>
<organism>
    <name type="scientific">Legionella pneumophila (strain Lens)</name>
    <dbReference type="NCBI Taxonomy" id="297245"/>
    <lineage>
        <taxon>Bacteria</taxon>
        <taxon>Pseudomonadati</taxon>
        <taxon>Pseudomonadota</taxon>
        <taxon>Gammaproteobacteria</taxon>
        <taxon>Legionellales</taxon>
        <taxon>Legionellaceae</taxon>
        <taxon>Legionella</taxon>
    </lineage>
</organism>
<gene>
    <name evidence="1" type="primary">rplO</name>
    <name type="ordered locus">lpl0388</name>
</gene>
<keyword id="KW-0687">Ribonucleoprotein</keyword>
<keyword id="KW-0689">Ribosomal protein</keyword>
<keyword id="KW-0694">RNA-binding</keyword>
<keyword id="KW-0699">rRNA-binding</keyword>